<feature type="chain" id="PRO_0000183469" description="Cytochrome c oxidase subunit 1 homolog, bacteroid">
    <location>
        <begin position="1"/>
        <end position="549"/>
    </location>
</feature>
<feature type="transmembrane region" description="Helical" evidence="2">
    <location>
        <begin position="12"/>
        <end position="32"/>
    </location>
</feature>
<feature type="transmembrane region" description="Helical" evidence="2">
    <location>
        <begin position="39"/>
        <end position="59"/>
    </location>
</feature>
<feature type="transmembrane region" description="Helical" evidence="2">
    <location>
        <begin position="87"/>
        <end position="107"/>
    </location>
</feature>
<feature type="transmembrane region" description="Helical" evidence="2">
    <location>
        <begin position="132"/>
        <end position="152"/>
    </location>
</feature>
<feature type="transmembrane region" description="Helical" evidence="2">
    <location>
        <begin position="168"/>
        <end position="188"/>
    </location>
</feature>
<feature type="transmembrane region" description="Helical" evidence="2">
    <location>
        <begin position="201"/>
        <end position="221"/>
    </location>
</feature>
<feature type="transmembrane region" description="Helical" evidence="2">
    <location>
        <begin position="228"/>
        <end position="248"/>
    </location>
</feature>
<feature type="transmembrane region" description="Helical" evidence="2">
    <location>
        <begin position="279"/>
        <end position="299"/>
    </location>
</feature>
<feature type="transmembrane region" description="Helical" evidence="2">
    <location>
        <begin position="312"/>
        <end position="332"/>
    </location>
</feature>
<feature type="transmembrane region" description="Helical" evidence="2">
    <location>
        <begin position="344"/>
        <end position="364"/>
    </location>
</feature>
<feature type="transmembrane region" description="Helical" evidence="2">
    <location>
        <begin position="382"/>
        <end position="402"/>
    </location>
</feature>
<feature type="transmembrane region" description="Helical" evidence="2">
    <location>
        <begin position="423"/>
        <end position="443"/>
    </location>
</feature>
<feature type="transmembrane region" description="Helical" evidence="2">
    <location>
        <begin position="458"/>
        <end position="478"/>
    </location>
</feature>
<feature type="transmembrane region" description="Helical" evidence="2">
    <location>
        <begin position="512"/>
        <end position="532"/>
    </location>
</feature>
<feature type="binding site" description="axial binding residue" evidence="1">
    <location>
        <position position="131"/>
    </location>
    <ligand>
        <name>heme b</name>
        <dbReference type="ChEBI" id="CHEBI:60344"/>
        <label>1; low-spin</label>
    </ligand>
    <ligandPart>
        <name>Fe</name>
        <dbReference type="ChEBI" id="CHEBI:18248"/>
    </ligandPart>
</feature>
<feature type="binding site" evidence="1">
    <location>
        <position position="280"/>
    </location>
    <ligand>
        <name>Cu cation</name>
        <dbReference type="ChEBI" id="CHEBI:23378"/>
        <label>B</label>
    </ligand>
</feature>
<feature type="binding site" evidence="1">
    <location>
        <position position="330"/>
    </location>
    <ligand>
        <name>Cu cation</name>
        <dbReference type="ChEBI" id="CHEBI:23378"/>
        <label>B</label>
    </ligand>
</feature>
<feature type="binding site" evidence="1">
    <location>
        <position position="331"/>
    </location>
    <ligand>
        <name>Cu cation</name>
        <dbReference type="ChEBI" id="CHEBI:23378"/>
        <label>B</label>
    </ligand>
</feature>
<feature type="binding site" description="axial binding residue" evidence="1">
    <location>
        <position position="418"/>
    </location>
    <ligand>
        <name>heme b</name>
        <dbReference type="ChEBI" id="CHEBI:60344"/>
        <label>2; high-spin</label>
    </ligand>
    <ligandPart>
        <name>Fe</name>
        <dbReference type="ChEBI" id="CHEBI:18248"/>
    </ligandPart>
</feature>
<feature type="binding site" description="axial binding residue" evidence="1">
    <location>
        <position position="420"/>
    </location>
    <ligand>
        <name>heme b</name>
        <dbReference type="ChEBI" id="CHEBI:60344"/>
        <label>1; low-spin</label>
    </ligand>
    <ligandPart>
        <name>Fe</name>
        <dbReference type="ChEBI" id="CHEBI:18248"/>
    </ligandPart>
</feature>
<gene>
    <name type="primary">fixN</name>
    <name type="ordered locus">blr2763</name>
</gene>
<protein>
    <recommendedName>
        <fullName>Cytochrome c oxidase subunit 1 homolog, bacteroid</fullName>
        <ecNumber>7.1.1.9</ecNumber>
    </recommendedName>
    <alternativeName>
        <fullName>Cytochrome CBB3 subunit 1</fullName>
    </alternativeName>
    <alternativeName>
        <fullName>Cytochrome c oxidase polypeptide I homolog</fullName>
    </alternativeName>
    <alternativeName>
        <fullName>Heme B/copper cytochrome c oxidase subunit</fullName>
    </alternativeName>
</protein>
<organism>
    <name type="scientific">Bradyrhizobium diazoefficiens (strain JCM 10833 / BCRC 13528 / IAM 13628 / NBRC 14792 / USDA 110)</name>
    <dbReference type="NCBI Taxonomy" id="224911"/>
    <lineage>
        <taxon>Bacteria</taxon>
        <taxon>Pseudomonadati</taxon>
        <taxon>Pseudomonadota</taxon>
        <taxon>Alphaproteobacteria</taxon>
        <taxon>Hyphomicrobiales</taxon>
        <taxon>Nitrobacteraceae</taxon>
        <taxon>Bradyrhizobium</taxon>
    </lineage>
</organism>
<dbReference type="EC" id="7.1.1.9"/>
<dbReference type="EMBL" id="L07487">
    <property type="protein sequence ID" value="AAA26203.1"/>
    <property type="molecule type" value="Genomic_DNA"/>
</dbReference>
<dbReference type="EMBL" id="AJ005001">
    <property type="protein sequence ID" value="CAA06279.1"/>
    <property type="molecule type" value="Genomic_DNA"/>
</dbReference>
<dbReference type="EMBL" id="BA000040">
    <property type="protein sequence ID" value="BAC48028.1"/>
    <property type="molecule type" value="Genomic_DNA"/>
</dbReference>
<dbReference type="PIR" id="A47468">
    <property type="entry name" value="A47468"/>
</dbReference>
<dbReference type="RefSeq" id="NP_769403.1">
    <property type="nucleotide sequence ID" value="NC_004463.1"/>
</dbReference>
<dbReference type="RefSeq" id="WP_011085548.1">
    <property type="nucleotide sequence ID" value="NC_004463.1"/>
</dbReference>
<dbReference type="SMR" id="Q03073"/>
<dbReference type="STRING" id="224911.AAV28_10840"/>
<dbReference type="EnsemblBacteria" id="BAC48028">
    <property type="protein sequence ID" value="BAC48028"/>
    <property type="gene ID" value="BAC48028"/>
</dbReference>
<dbReference type="GeneID" id="46489809"/>
<dbReference type="KEGG" id="bja:blr2763"/>
<dbReference type="PATRIC" id="fig|224911.44.peg.2384"/>
<dbReference type="eggNOG" id="COG3278">
    <property type="taxonomic scope" value="Bacteria"/>
</dbReference>
<dbReference type="HOGENOM" id="CLU_017702_3_4_5"/>
<dbReference type="InParanoid" id="Q03073"/>
<dbReference type="OrthoDB" id="9806838at2"/>
<dbReference type="PhylomeDB" id="Q03073"/>
<dbReference type="UniPathway" id="UPA00705"/>
<dbReference type="Proteomes" id="UP000002526">
    <property type="component" value="Chromosome"/>
</dbReference>
<dbReference type="GO" id="GO:0005886">
    <property type="term" value="C:plasma membrane"/>
    <property type="evidence" value="ECO:0007669"/>
    <property type="project" value="UniProtKB-SubCell"/>
</dbReference>
<dbReference type="GO" id="GO:0004129">
    <property type="term" value="F:cytochrome-c oxidase activity"/>
    <property type="evidence" value="ECO:0007669"/>
    <property type="project" value="UniProtKB-EC"/>
</dbReference>
<dbReference type="GO" id="GO:0020037">
    <property type="term" value="F:heme binding"/>
    <property type="evidence" value="ECO:0007669"/>
    <property type="project" value="InterPro"/>
</dbReference>
<dbReference type="GO" id="GO:0046872">
    <property type="term" value="F:metal ion binding"/>
    <property type="evidence" value="ECO:0007669"/>
    <property type="project" value="UniProtKB-KW"/>
</dbReference>
<dbReference type="GO" id="GO:0009060">
    <property type="term" value="P:aerobic respiration"/>
    <property type="evidence" value="ECO:0000318"/>
    <property type="project" value="GO_Central"/>
</dbReference>
<dbReference type="GO" id="GO:0006119">
    <property type="term" value="P:oxidative phosphorylation"/>
    <property type="evidence" value="ECO:0007669"/>
    <property type="project" value="UniProtKB-UniPathway"/>
</dbReference>
<dbReference type="GO" id="GO:0022904">
    <property type="term" value="P:respiratory electron transport chain"/>
    <property type="evidence" value="ECO:0000318"/>
    <property type="project" value="GO_Central"/>
</dbReference>
<dbReference type="CDD" id="cd01661">
    <property type="entry name" value="cbb3_Oxidase_I"/>
    <property type="match status" value="1"/>
</dbReference>
<dbReference type="FunFam" id="1.20.210.10:FF:000005">
    <property type="entry name" value="Cytochrome c oxidase, cbb3-type, subunit I"/>
    <property type="match status" value="1"/>
</dbReference>
<dbReference type="Gene3D" id="1.20.210.10">
    <property type="entry name" value="Cytochrome c oxidase-like, subunit I domain"/>
    <property type="match status" value="1"/>
</dbReference>
<dbReference type="InterPro" id="IPR023616">
    <property type="entry name" value="Cyt_c_oxase-like_su1_dom"/>
</dbReference>
<dbReference type="InterPro" id="IPR036927">
    <property type="entry name" value="Cyt_c_oxase-like_su1_sf"/>
</dbReference>
<dbReference type="InterPro" id="IPR000883">
    <property type="entry name" value="Cyt_C_Oxase_1"/>
</dbReference>
<dbReference type="InterPro" id="IPR023615">
    <property type="entry name" value="Cyt_c_Oxase_su1_BS"/>
</dbReference>
<dbReference type="InterPro" id="IPR004677">
    <property type="entry name" value="Cyt_c_oxidase_cbb3_su1"/>
</dbReference>
<dbReference type="NCBIfam" id="TIGR00780">
    <property type="entry name" value="ccoN"/>
    <property type="match status" value="1"/>
</dbReference>
<dbReference type="PANTHER" id="PTHR10422">
    <property type="entry name" value="CYTOCHROME C OXIDASE SUBUNIT 1"/>
    <property type="match status" value="1"/>
</dbReference>
<dbReference type="PANTHER" id="PTHR10422:SF29">
    <property type="entry name" value="CYTOCHROME C OXIDASE SUBUNIT 1 HOMOLOG, BACTEROID"/>
    <property type="match status" value="1"/>
</dbReference>
<dbReference type="Pfam" id="PF00115">
    <property type="entry name" value="COX1"/>
    <property type="match status" value="1"/>
</dbReference>
<dbReference type="SUPFAM" id="SSF81442">
    <property type="entry name" value="Cytochrome c oxidase subunit I-like"/>
    <property type="match status" value="1"/>
</dbReference>
<dbReference type="PROSITE" id="PS50855">
    <property type="entry name" value="COX1"/>
    <property type="match status" value="1"/>
</dbReference>
<dbReference type="PROSITE" id="PS00077">
    <property type="entry name" value="COX1_CUB"/>
    <property type="match status" value="1"/>
</dbReference>
<keyword id="KW-1003">Cell membrane</keyword>
<keyword id="KW-0186">Copper</keyword>
<keyword id="KW-0249">Electron transport</keyword>
<keyword id="KW-0349">Heme</keyword>
<keyword id="KW-0408">Iron</keyword>
<keyword id="KW-0472">Membrane</keyword>
<keyword id="KW-0479">Metal-binding</keyword>
<keyword id="KW-1185">Reference proteome</keyword>
<keyword id="KW-0679">Respiratory chain</keyword>
<keyword id="KW-1278">Translocase</keyword>
<keyword id="KW-0812">Transmembrane</keyword>
<keyword id="KW-1133">Transmembrane helix</keyword>
<keyword id="KW-0813">Transport</keyword>
<accession>Q03073</accession>
<name>FIXN_BRADU</name>
<evidence type="ECO:0000250" key="1">
    <source>
        <dbReference type="UniProtKB" id="D9IA43"/>
    </source>
</evidence>
<evidence type="ECO:0000255" key="2"/>
<evidence type="ECO:0000305" key="3"/>
<sequence>MSQPSISKSMTIGESGLAVVFAATAFLCVIAAAKALDAPFAFHAALSAAASVAAVFCIVNRYFERPAALPPAEINGRPNYNMGPIKFSSFMAMFWGIAGFLVGLIIASQLAWPALNFDLPWISFGRLRPLHTSAVIFAFGGNVLIATSFYVVQKSCRVRLAGDLAPWFVVVGYNFFILVAGTGYLLGVTQSKEYAEPEWYADLWLTIVWVVYLLVFLATIIKRKEPHIFVANWFYLAFIVTIAVLHLGNNPALPVSAFGSKSYVAWGGIQDAMFQWWYGHNAVGFFLTAGFLAIMYYFIPKRAERPIYSYRLSIIHFWALIFLYIWAGPHHLHYTALPDWTQTLGMTFSIMLWMPSWGGMINGLMTLSGAWDKLRTDPVLRMLVVSVAFYGMSTFEGPMMSIKVVNSLSHYTDWTIGHVHSGALGWVGFVSFGALYCLVPWAWNRKGLYSLKLVNWHFWVATLGIVLYISAMWVSGILQGLMWRAYTSLGFLEYSFIETVEAMHPFYIIRAAGGGLFLIGALIMAYNLWMTVRVGEAEVQMPVALQPAE</sequence>
<comment type="function">
    <text>Cytochrome c oxidase is the component of the respiratory chain that catalyzes the reduction of oxygen to water. Subunits 1-3 form the functional core of the enzyme complex. Co I is the catalytic subunit of the enzyme. Electrons originating in cytochrome c or a quinol are transferred to the bimetallic center formed by a high-spin heme and copper B.</text>
</comment>
<comment type="catalytic activity">
    <reaction>
        <text>4 Fe(II)-[cytochrome c] + O2 + 8 H(+)(in) = 4 Fe(III)-[cytochrome c] + 2 H2O + 4 H(+)(out)</text>
        <dbReference type="Rhea" id="RHEA:11436"/>
        <dbReference type="Rhea" id="RHEA-COMP:10350"/>
        <dbReference type="Rhea" id="RHEA-COMP:14399"/>
        <dbReference type="ChEBI" id="CHEBI:15377"/>
        <dbReference type="ChEBI" id="CHEBI:15378"/>
        <dbReference type="ChEBI" id="CHEBI:15379"/>
        <dbReference type="ChEBI" id="CHEBI:29033"/>
        <dbReference type="ChEBI" id="CHEBI:29034"/>
        <dbReference type="EC" id="7.1.1.9"/>
    </reaction>
</comment>
<comment type="cofactor">
    <cofactor evidence="1">
        <name>Cu(2+)</name>
        <dbReference type="ChEBI" id="CHEBI:29036"/>
    </cofactor>
    <text evidence="1">Binds 1 copper ion per subunit, denoted as copper B.</text>
</comment>
<comment type="cofactor">
    <cofactor evidence="1">
        <name>heme b</name>
        <dbReference type="ChEBI" id="CHEBI:60344"/>
    </cofactor>
    <text evidence="1">Binds 2 heme b groups per subunit, denoted as high- and low-spin.</text>
</comment>
<comment type="pathway">
    <text>Energy metabolism; oxidative phosphorylation.</text>
</comment>
<comment type="subcellular location">
    <subcellularLocation>
        <location>Cell membrane</location>
        <topology>Multi-pass membrane protein</topology>
    </subcellularLocation>
</comment>
<comment type="developmental stage">
    <text>Bacteroid (nitrogen-fixing endosymbiont).</text>
</comment>
<comment type="induction">
    <text>By low oxygen levels.</text>
</comment>
<comment type="miscellaneous">
    <text>This cytochrome oxidase is probably a cbb3-type.</text>
</comment>
<comment type="similarity">
    <text evidence="3">Belongs to the heme-copper respiratory oxidase family.</text>
</comment>
<proteinExistence type="evidence at transcript level"/>
<reference key="1">
    <citation type="journal article" date="1993" name="Proc. Natl. Acad. Sci. U.S.A.">
        <title>Genes for a microaerobically induced oxidase complex in Bradyrhizobium japonicum are essential for a nitrogen-fixing endosymbiosis.</title>
        <authorList>
            <person name="Preisig O."/>
            <person name="Anthamatten D."/>
            <person name="Hennecke H."/>
        </authorList>
    </citation>
    <scope>NUCLEOTIDE SEQUENCE [GENOMIC DNA]</scope>
    <source>
        <strain>USDA 110spc4</strain>
    </source>
</reference>
<reference key="2">
    <citation type="journal article" date="2002" name="DNA Res.">
        <title>Complete genomic sequence of nitrogen-fixing symbiotic bacterium Bradyrhizobium japonicum USDA110.</title>
        <authorList>
            <person name="Kaneko T."/>
            <person name="Nakamura Y."/>
            <person name="Sato S."/>
            <person name="Minamisawa K."/>
            <person name="Uchiumi T."/>
            <person name="Sasamoto S."/>
            <person name="Watanabe A."/>
            <person name="Idesawa K."/>
            <person name="Iriguchi M."/>
            <person name="Kawashima K."/>
            <person name="Kohara M."/>
            <person name="Matsumoto M."/>
            <person name="Shimpo S."/>
            <person name="Tsuruoka H."/>
            <person name="Wada T."/>
            <person name="Yamada M."/>
            <person name="Tabata S."/>
        </authorList>
    </citation>
    <scope>NUCLEOTIDE SEQUENCE [LARGE SCALE GENOMIC DNA]</scope>
    <source>
        <strain>JCM 10833 / BCRC 13528 / IAM 13628 / NBRC 14792 / USDA 110</strain>
    </source>
</reference>